<comment type="function">
    <text evidence="4">Degrades acetylated xylans by cleaving acetyl side groups from the hetero-xylan backbone.</text>
</comment>
<comment type="catalytic activity">
    <reaction>
        <text>Deacetylation of xylans and xylo-oligosaccharides.</text>
        <dbReference type="EC" id="3.1.1.72"/>
    </reaction>
</comment>
<comment type="biophysicochemical properties">
    <phDependence>
        <text evidence="4">Optimum pH is 6.</text>
    </phDependence>
    <temperatureDependence>
        <text evidence="4">Optimum temperature is 60 degrees Celsius.</text>
    </temperatureDependence>
</comment>
<comment type="pathway">
    <text>Glycan degradation; xylan degradation.</text>
</comment>
<comment type="subunit">
    <text>Monomer.</text>
</comment>
<comment type="subcellular location">
    <subcellularLocation>
        <location evidence="4">Secreted</location>
    </subcellularLocation>
</comment>
<comment type="induction">
    <text evidence="3">Induced by xylan and repressed by glucose. Expressed at neutral pH, but not under alkaline or acidic condtions.</text>
</comment>
<comment type="similarity">
    <text evidence="6">Belongs to the cutinase family. Acetylxylan esterase subfamily.</text>
</comment>
<evidence type="ECO:0000250" key="1"/>
<evidence type="ECO:0000255" key="2"/>
<evidence type="ECO:0000269" key="3">
    <source>
    </source>
</evidence>
<evidence type="ECO:0000269" key="4">
    <source>
    </source>
</evidence>
<evidence type="ECO:0000269" key="5">
    <source>
    </source>
</evidence>
<evidence type="ECO:0000305" key="6"/>
<evidence type="ECO:0007829" key="7">
    <source>
        <dbReference type="PDB" id="1G66"/>
    </source>
</evidence>
<accession>O59893</accession>
<dbReference type="EC" id="3.1.1.72"/>
<dbReference type="EMBL" id="AF015285">
    <property type="protein sequence ID" value="AAC39371.1"/>
    <property type="molecule type" value="mRNA"/>
</dbReference>
<dbReference type="PDB" id="1BS9">
    <property type="method" value="X-ray"/>
    <property type="resolution" value="1.10 A"/>
    <property type="chains" value="A=28-234"/>
</dbReference>
<dbReference type="PDB" id="1G66">
    <property type="method" value="X-ray"/>
    <property type="resolution" value="0.90 A"/>
    <property type="chains" value="A=28-234"/>
</dbReference>
<dbReference type="PDB" id="2AXE">
    <property type="method" value="X-ray"/>
    <property type="resolution" value="1.80 A"/>
    <property type="chains" value="A=28-234"/>
</dbReference>
<dbReference type="PDBsum" id="1BS9"/>
<dbReference type="PDBsum" id="1G66"/>
<dbReference type="PDBsum" id="2AXE"/>
<dbReference type="SMR" id="O59893"/>
<dbReference type="ESTHER" id="penpu-axylest">
    <property type="family name" value="Acetylxylan_esterase"/>
</dbReference>
<dbReference type="GlyCosmos" id="O59893">
    <property type="glycosylation" value="1 site, No reported glycans"/>
</dbReference>
<dbReference type="BioCyc" id="MetaCyc:MONOMER-16378"/>
<dbReference type="UniPathway" id="UPA00114"/>
<dbReference type="EvolutionaryTrace" id="O59893"/>
<dbReference type="GO" id="GO:0005576">
    <property type="term" value="C:extracellular region"/>
    <property type="evidence" value="ECO:0007669"/>
    <property type="project" value="UniProtKB-SubCell"/>
</dbReference>
<dbReference type="GO" id="GO:0046555">
    <property type="term" value="F:acetylxylan esterase activity"/>
    <property type="evidence" value="ECO:0007669"/>
    <property type="project" value="UniProtKB-EC"/>
</dbReference>
<dbReference type="GO" id="GO:0030245">
    <property type="term" value="P:cellulose catabolic process"/>
    <property type="evidence" value="ECO:0007669"/>
    <property type="project" value="UniProtKB-KW"/>
</dbReference>
<dbReference type="GO" id="GO:0045493">
    <property type="term" value="P:xylan catabolic process"/>
    <property type="evidence" value="ECO:0007669"/>
    <property type="project" value="UniProtKB-UniPathway"/>
</dbReference>
<dbReference type="Gene3D" id="3.40.50.1820">
    <property type="entry name" value="alpha/beta hydrolase"/>
    <property type="match status" value="1"/>
</dbReference>
<dbReference type="InterPro" id="IPR029058">
    <property type="entry name" value="AB_hydrolase_fold"/>
</dbReference>
<dbReference type="InterPro" id="IPR000675">
    <property type="entry name" value="Cutinase/axe"/>
</dbReference>
<dbReference type="PANTHER" id="PTHR33630:SF13">
    <property type="entry name" value="ACETYLXYLAN ESTERASE"/>
    <property type="match status" value="1"/>
</dbReference>
<dbReference type="PANTHER" id="PTHR33630">
    <property type="entry name" value="CUTINASE RV1984C-RELATED-RELATED"/>
    <property type="match status" value="1"/>
</dbReference>
<dbReference type="Pfam" id="PF01083">
    <property type="entry name" value="Cutinase"/>
    <property type="match status" value="1"/>
</dbReference>
<dbReference type="SMART" id="SM01110">
    <property type="entry name" value="Cutinase"/>
    <property type="match status" value="1"/>
</dbReference>
<dbReference type="SUPFAM" id="SSF53474">
    <property type="entry name" value="alpha/beta-Hydrolases"/>
    <property type="match status" value="1"/>
</dbReference>
<gene>
    <name type="primary">axe-2</name>
    <name type="synonym">axeII</name>
</gene>
<reference key="1">
    <citation type="journal article" date="1998" name="FEBS Lett.">
        <title>Acetyl xylan esterase II from Penicillium purpurogenum is similar to an esterase from Trichoderma reesei but lacks a cellulose binding domain.</title>
        <authorList>
            <person name="Gutierrez R."/>
            <person name="Cederlund E."/>
            <person name="Hjelmqvist L."/>
            <person name="Peirano A."/>
            <person name="Herrera F."/>
            <person name="Ghosh D."/>
            <person name="Duax W."/>
            <person name="Joernvall H."/>
            <person name="Eyzaguirre J."/>
        </authorList>
    </citation>
    <scope>NUCLEOTIDE SEQUENCE [GENOMIC DNA / MRNA]</scope>
    <scope>PROTEIN SEQUENCE OF 28-234</scope>
</reference>
<reference key="2">
    <citation type="journal article" date="1996" name="Biotechnol. Appl. Biochem.">
        <title>Purification and characterization of two acetyl xylan esterases from Penicillium purpurogenum.</title>
        <authorList>
            <person name="Egana L."/>
            <person name="Gutierrez R."/>
            <person name="Caputo V."/>
            <person name="Peirano A."/>
            <person name="Steiner J."/>
            <person name="Eyzaguirre J."/>
        </authorList>
    </citation>
    <scope>PROTEIN SEQUENCE OF 28-57</scope>
    <scope>FUNCTION</scope>
    <scope>BIOPHYSICOCHEMICAL PROPERTIES</scope>
    <scope>SUBCELLULAR LOCATION</scope>
</reference>
<reference key="3">
    <citation type="journal article" date="2004" name="Biol. Res.">
        <title>The acetyl xylan esterase II gene from Penicillium purpurogenum is differentially expressed in several carbon sources, and tightly regulated by pH.</title>
        <authorList>
            <person name="Chavez R."/>
            <person name="Schachter K."/>
            <person name="Navarro C."/>
            <person name="Peirano A."/>
            <person name="Bull P."/>
            <person name="Eyzaguirre J."/>
        </authorList>
    </citation>
    <scope>INDUCTION</scope>
</reference>
<reference key="4">
    <citation type="journal article" date="1999" name="Acta Crystallogr. D">
        <title>Determination of a protein structure by iodination: the structure of iodinated acetylxylan esterase.</title>
        <authorList>
            <person name="Ghosh D."/>
            <person name="Erman M."/>
            <person name="Sawicki M."/>
            <person name="Lala P."/>
            <person name="Weeks D.R."/>
            <person name="Li N."/>
            <person name="Pangborn W."/>
            <person name="Thiel D.J."/>
            <person name="Joernvall H."/>
            <person name="Gutierrez R."/>
            <person name="Eyzaguirre J."/>
        </authorList>
    </citation>
    <scope>X-RAY CRYSTALLOGRAPHY (1.1 ANGSTROMS) OF 28-234</scope>
</reference>
<reference key="5">
    <citation type="journal article" date="2001" name="J. Biol. Chem.">
        <title>Multiple conformations of catalytic serine and histidine in acetylxylan esterase at 0.90 A.</title>
        <authorList>
            <person name="Ghosh D."/>
            <person name="Sawicki M."/>
            <person name="Lala P."/>
            <person name="Erman M."/>
            <person name="Pangborn W."/>
            <person name="Eyzaguirre J."/>
            <person name="Gutierrez R."/>
            <person name="Joernvall H."/>
            <person name="Thiel D.J."/>
        </authorList>
    </citation>
    <scope>X-RAY CRYSTALLOGRAPHY (0.9 ANGSTROMS) OF 28-234</scope>
</reference>
<sequence length="234" mass="23478">MHSKFFAASLLGLGAAAIPLEGVMEKRSCPAIHVFGARETTASPGYGSSSTVVNGVLSAYPGSTAEAINYPACGGQSSCGGASYSSSVAQGIAAVASAVNSFNSQCPSTKIVLVGYSQGGEIMDVALCGGGDPNQGYTNTAVQLSSSAVNMVKAAIFMGDPMFRAGLSYEVGTCAAGGFDQRPAGFSCPSAAKIKSYCDASDPYCCNGSNAATHQGYGSEYGSQALAFVKSKLG</sequence>
<proteinExistence type="evidence at protein level"/>
<protein>
    <recommendedName>
        <fullName>Acetylxylan esterase 2</fullName>
        <ecNumber>3.1.1.72</ecNumber>
    </recommendedName>
    <alternativeName>
        <fullName>AXE II</fullName>
    </alternativeName>
</protein>
<organism>
    <name type="scientific">Talaromyces purpureogenus</name>
    <name type="common">Soft rot fungus</name>
    <name type="synonym">Penicillium purpureogenum</name>
    <dbReference type="NCBI Taxonomy" id="1266744"/>
    <lineage>
        <taxon>Eukaryota</taxon>
        <taxon>Fungi</taxon>
        <taxon>Dikarya</taxon>
        <taxon>Ascomycota</taxon>
        <taxon>Pezizomycotina</taxon>
        <taxon>Eurotiomycetes</taxon>
        <taxon>Eurotiomycetidae</taxon>
        <taxon>Eurotiales</taxon>
        <taxon>Trichocomaceae</taxon>
        <taxon>Talaromyces</taxon>
        <taxon>Talaromyces sect. Talaromyces</taxon>
    </lineage>
</organism>
<name>AXE2_TALPU</name>
<feature type="signal peptide" evidence="2">
    <location>
        <begin position="1"/>
        <end position="17"/>
    </location>
</feature>
<feature type="propeptide" id="PRO_0000234624" evidence="4 5">
    <location>
        <begin position="18"/>
        <end position="27"/>
    </location>
</feature>
<feature type="chain" id="PRO_0000234625" description="Acetylxylan esterase 2">
    <location>
        <begin position="28"/>
        <end position="234"/>
    </location>
</feature>
<feature type="active site" evidence="1">
    <location>
        <position position="117"/>
    </location>
</feature>
<feature type="active site" evidence="1">
    <location>
        <position position="202"/>
    </location>
</feature>
<feature type="active site" evidence="1">
    <location>
        <position position="214"/>
    </location>
</feature>
<feature type="glycosylation site" description="N-linked (GlcNAc...) asparagine" evidence="2">
    <location>
        <position position="207"/>
    </location>
</feature>
<feature type="disulfide bond">
    <location>
        <begin position="29"/>
        <end position="106"/>
    </location>
</feature>
<feature type="disulfide bond">
    <location>
        <begin position="73"/>
        <end position="79"/>
    </location>
</feature>
<feature type="disulfide bond">
    <location>
        <begin position="128"/>
        <end position="188"/>
    </location>
</feature>
<feature type="disulfide bond">
    <location>
        <begin position="174"/>
        <end position="206"/>
    </location>
</feature>
<feature type="disulfide bond">
    <location>
        <begin position="198"/>
        <end position="205"/>
    </location>
</feature>
<feature type="sequence conflict" description="In Ref. 2; AA sequence." evidence="6" ref="2">
    <original>L</original>
    <variation>I</variation>
    <location>
        <position position="57"/>
    </location>
</feature>
<feature type="strand" evidence="7">
    <location>
        <begin position="31"/>
        <end position="37"/>
    </location>
</feature>
<feature type="helix" evidence="7">
    <location>
        <begin position="47"/>
        <end position="49"/>
    </location>
</feature>
<feature type="helix" evidence="7">
    <location>
        <begin position="50"/>
        <end position="59"/>
    </location>
</feature>
<feature type="strand" evidence="7">
    <location>
        <begin position="64"/>
        <end position="67"/>
    </location>
</feature>
<feature type="helix" evidence="7">
    <location>
        <begin position="77"/>
        <end position="79"/>
    </location>
</feature>
<feature type="helix" evidence="7">
    <location>
        <begin position="84"/>
        <end position="105"/>
    </location>
</feature>
<feature type="strand" evidence="7">
    <location>
        <begin position="110"/>
        <end position="116"/>
    </location>
</feature>
<feature type="helix" evidence="7">
    <location>
        <begin position="118"/>
        <end position="128"/>
    </location>
</feature>
<feature type="helix" evidence="7">
    <location>
        <begin position="133"/>
        <end position="135"/>
    </location>
</feature>
<feature type="helix" evidence="7">
    <location>
        <begin position="146"/>
        <end position="151"/>
    </location>
</feature>
<feature type="strand" evidence="7">
    <location>
        <begin position="152"/>
        <end position="159"/>
    </location>
</feature>
<feature type="strand" evidence="7">
    <location>
        <begin position="170"/>
        <end position="173"/>
    </location>
</feature>
<feature type="strand" evidence="7">
    <location>
        <begin position="175"/>
        <end position="177"/>
    </location>
</feature>
<feature type="helix" evidence="7">
    <location>
        <begin position="191"/>
        <end position="193"/>
    </location>
</feature>
<feature type="strand" evidence="7">
    <location>
        <begin position="194"/>
        <end position="197"/>
    </location>
</feature>
<feature type="turn" evidence="7">
    <location>
        <begin position="203"/>
        <end position="205"/>
    </location>
</feature>
<feature type="helix" evidence="7">
    <location>
        <begin position="212"/>
        <end position="215"/>
    </location>
</feature>
<feature type="helix" evidence="7">
    <location>
        <begin position="217"/>
        <end position="233"/>
    </location>
</feature>
<keyword id="KW-0002">3D-structure</keyword>
<keyword id="KW-0119">Carbohydrate metabolism</keyword>
<keyword id="KW-0136">Cellulose degradation</keyword>
<keyword id="KW-0165">Cleavage on pair of basic residues</keyword>
<keyword id="KW-0903">Direct protein sequencing</keyword>
<keyword id="KW-1015">Disulfide bond</keyword>
<keyword id="KW-0325">Glycoprotein</keyword>
<keyword id="KW-0378">Hydrolase</keyword>
<keyword id="KW-0624">Polysaccharide degradation</keyword>
<keyword id="KW-0964">Secreted</keyword>
<keyword id="KW-0719">Serine esterase</keyword>
<keyword id="KW-0732">Signal</keyword>